<gene>
    <name type="primary">Segment-10</name>
    <name type="synonym">L10</name>
</gene>
<feature type="chain" id="PRO_0000040654" description="Non-structural protein NS3">
    <location>
        <begin position="1"/>
        <end position="205"/>
    </location>
</feature>
<feature type="chain" id="PRO_0000040655" description="Non-structural protein NS3A">
    <location>
        <begin position="7"/>
        <end position="205"/>
    </location>
</feature>
<feature type="region of interest" description="Disordered" evidence="1">
    <location>
        <begin position="177"/>
        <end position="205"/>
    </location>
</feature>
<feature type="compositionally biased region" description="Gly residues" evidence="1">
    <location>
        <begin position="196"/>
        <end position="205"/>
    </location>
</feature>
<proteinExistence type="inferred from homology"/>
<accession>P32555</accession>
<comment type="function">
    <text>May play a role in the release of virions from infected cells.</text>
</comment>
<comment type="similarity">
    <text evidence="2">Belongs to the orbivirus NS3 family.</text>
</comment>
<reference key="1">
    <citation type="journal article" date="1992" name="Virology">
        <title>Comparison of the nonstructural protein, NS3, of tick-borne and insect-borne orbiviruses.</title>
        <authorList>
            <person name="Moss S.R."/>
            <person name="Jones L.D."/>
            <person name="Nuttall P.A."/>
        </authorList>
    </citation>
    <scope>NUCLEOTIDE SEQUENCE [GENOMIC RNA]</scope>
</reference>
<name>VNS3_BRD</name>
<evidence type="ECO:0000256" key="1">
    <source>
        <dbReference type="SAM" id="MobiDB-lite"/>
    </source>
</evidence>
<evidence type="ECO:0000305" key="2"/>
<sequence length="205" mass="22044">MLAALEMKSSPTAPPAYAAIPSTNAALSVLQNAVASGTGANEVMRNEKAAYGAATEVLKDDETTRMLKMQVNEYSLAEMRAAYQKLKRQSRLLHYGELLCLALVLGLTFTLMASSTAAVLQSALQQVGITGHVVTGILTSLAIFLQHHRTRVLKRKRSVKRDIVKRMTYISLARRMGTRSPETGCRKVTSGLPHGASGGSGTRQG</sequence>
<organism>
    <name type="scientific">Broadhaven virus</name>
    <name type="common">BRD</name>
    <dbReference type="NCBI Taxonomy" id="10893"/>
    <lineage>
        <taxon>Viruses</taxon>
        <taxon>Riboviria</taxon>
        <taxon>Orthornavirae</taxon>
        <taxon>Duplornaviricota</taxon>
        <taxon>Resentoviricetes</taxon>
        <taxon>Reovirales</taxon>
        <taxon>Sedoreoviridae</taxon>
        <taxon>Orbivirus</taxon>
        <taxon>Great Island virus</taxon>
    </lineage>
</organism>
<protein>
    <recommendedName>
        <fullName>Non-structural protein NS3</fullName>
    </recommendedName>
    <component>
        <recommendedName>
            <fullName>Non-structural protein NS3A</fullName>
        </recommendedName>
    </component>
</protein>
<dbReference type="EMBL" id="M83197">
    <property type="status" value="NOT_ANNOTATED_CDS"/>
    <property type="molecule type" value="Genomic_RNA"/>
</dbReference>
<dbReference type="PIR" id="A42457">
    <property type="entry name" value="P8XRBH"/>
</dbReference>
<dbReference type="InterPro" id="IPR002565">
    <property type="entry name" value="Orbi_NS3"/>
</dbReference>
<dbReference type="Pfam" id="PF01616">
    <property type="entry name" value="Orbi_NS3"/>
    <property type="match status" value="1"/>
</dbReference>
<organismHost>
    <name type="scientific">Ixodes</name>
    <dbReference type="NCBI Taxonomy" id="6944"/>
</organismHost>
<organismHost>
    <name type="scientific">Laridae</name>
    <name type="common">gulls</name>
    <dbReference type="NCBI Taxonomy" id="8910"/>
</organismHost>
<organismHost>
    <name type="scientific">Pelecaniformes</name>
    <name type="common">Ibis, herons and pelicans</name>
    <dbReference type="NCBI Taxonomy" id="9205"/>
</organismHost>